<sequence length="552" mass="59351">MKIRFMMLFGLLTLPVLAWAADALTGDVQRQPLNIQAIVMFLLFVGGTLYITYWASKKTRSRSDYYTAGGNITGFQNGLAIAGDYMSAASFLGISALVYTSGYDGLIYSLGFLVGWPIILFLIAERLRNLGRYTFADVASYRLQQRPIRSLSACGSLVVVALYLIAQMVGAGKLIELLFGLNYHVAVILVGILMVMYVMFGGMLATTWVQIIKAVLLLFGATFMAVMVMKSVGFSFDALFKQAMAVHPKGASIMSPGGLVSDPISALSLGLGLMFGTAGLPHILMRFFTVSDAKEARKSVFYATGFMGYFYFLTFIIGFGAILLVSANPEFKDATGALIGGNNMAAVHLADAVGGDFFLGFISAVAFATILAVVAGLTLAGASAVSHDLYSNVIKKGKATERDELKVSKITVLVLGVVAISLGILFENQNIAFMVGLAFSIAASCNFPIIIISMYWSKLTTRGAMIGGWAGLLTAVILMILGPTIWVKILGHATPIYPYDYPALFSMLVAFIGIWFFSITDRSEAGQQERARFHAQFVRSQTGVGASKGSSH</sequence>
<keyword id="KW-0997">Cell inner membrane</keyword>
<keyword id="KW-1003">Cell membrane</keyword>
<keyword id="KW-0406">Ion transport</keyword>
<keyword id="KW-0472">Membrane</keyword>
<keyword id="KW-0915">Sodium</keyword>
<keyword id="KW-0739">Sodium transport</keyword>
<keyword id="KW-0769">Symport</keyword>
<keyword id="KW-0812">Transmembrane</keyword>
<keyword id="KW-1133">Transmembrane helix</keyword>
<keyword id="KW-0813">Transport</keyword>
<name>ACTP_PECCP</name>
<comment type="function">
    <text evidence="1">Transports acetate.</text>
</comment>
<comment type="subcellular location">
    <subcellularLocation>
        <location evidence="1">Cell inner membrane</location>
        <topology evidence="1">Multi-pass membrane protein</topology>
    </subcellularLocation>
</comment>
<comment type="similarity">
    <text evidence="1">Belongs to the sodium:solute symporter (SSF) (TC 2.A.21) family.</text>
</comment>
<protein>
    <recommendedName>
        <fullName evidence="1">Cation/acetate symporter ActP</fullName>
    </recommendedName>
    <alternativeName>
        <fullName evidence="1">Acetate permease</fullName>
    </alternativeName>
    <alternativeName>
        <fullName evidence="1">Acetate transporter ActP</fullName>
    </alternativeName>
</protein>
<feature type="chain" id="PRO_1000215267" description="Cation/acetate symporter ActP">
    <location>
        <begin position="1"/>
        <end position="552"/>
    </location>
</feature>
<feature type="transmembrane region" description="Helical" evidence="1">
    <location>
        <begin position="5"/>
        <end position="25"/>
    </location>
</feature>
<feature type="transmembrane region" description="Helical" evidence="1">
    <location>
        <begin position="35"/>
        <end position="55"/>
    </location>
</feature>
<feature type="transmembrane region" description="Helical" evidence="1">
    <location>
        <begin position="78"/>
        <end position="98"/>
    </location>
</feature>
<feature type="transmembrane region" description="Helical" evidence="1">
    <location>
        <begin position="105"/>
        <end position="125"/>
    </location>
</feature>
<feature type="transmembrane region" description="Helical" evidence="1">
    <location>
        <begin position="151"/>
        <end position="171"/>
    </location>
</feature>
<feature type="transmembrane region" description="Helical" evidence="1">
    <location>
        <begin position="185"/>
        <end position="205"/>
    </location>
</feature>
<feature type="transmembrane region" description="Helical" evidence="1">
    <location>
        <begin position="208"/>
        <end position="228"/>
    </location>
</feature>
<feature type="transmembrane region" description="Helical" evidence="1">
    <location>
        <begin position="264"/>
        <end position="284"/>
    </location>
</feature>
<feature type="transmembrane region" description="Helical" evidence="1">
    <location>
        <begin position="305"/>
        <end position="325"/>
    </location>
</feature>
<feature type="transmembrane region" description="Helical" evidence="1">
    <location>
        <begin position="357"/>
        <end position="377"/>
    </location>
</feature>
<feature type="transmembrane region" description="Helical" evidence="1">
    <location>
        <begin position="407"/>
        <end position="427"/>
    </location>
</feature>
<feature type="transmembrane region" description="Helical" evidence="1">
    <location>
        <begin position="431"/>
        <end position="451"/>
    </location>
</feature>
<feature type="transmembrane region" description="Helical" evidence="1">
    <location>
        <begin position="466"/>
        <end position="486"/>
    </location>
</feature>
<feature type="transmembrane region" description="Helical" evidence="1">
    <location>
        <begin position="499"/>
        <end position="519"/>
    </location>
</feature>
<evidence type="ECO:0000255" key="1">
    <source>
        <dbReference type="HAMAP-Rule" id="MF_01426"/>
    </source>
</evidence>
<proteinExistence type="inferred from homology"/>
<gene>
    <name evidence="1" type="primary">actP</name>
    <name type="ordered locus">PC1_0683</name>
</gene>
<accession>C6D930</accession>
<dbReference type="EMBL" id="CP001657">
    <property type="protein sequence ID" value="ACT11738.1"/>
    <property type="molecule type" value="Genomic_DNA"/>
</dbReference>
<dbReference type="RefSeq" id="WP_012773383.1">
    <property type="nucleotide sequence ID" value="NC_012917.1"/>
</dbReference>
<dbReference type="SMR" id="C6D930"/>
<dbReference type="STRING" id="561230.PC1_0683"/>
<dbReference type="KEGG" id="pct:PC1_0683"/>
<dbReference type="eggNOG" id="COG4147">
    <property type="taxonomic scope" value="Bacteria"/>
</dbReference>
<dbReference type="HOGENOM" id="CLU_018808_8_3_6"/>
<dbReference type="OrthoDB" id="9764416at2"/>
<dbReference type="Proteomes" id="UP000002736">
    <property type="component" value="Chromosome"/>
</dbReference>
<dbReference type="GO" id="GO:0005886">
    <property type="term" value="C:plasma membrane"/>
    <property type="evidence" value="ECO:0007669"/>
    <property type="project" value="UniProtKB-SubCell"/>
</dbReference>
<dbReference type="GO" id="GO:0015123">
    <property type="term" value="F:acetate transmembrane transporter activity"/>
    <property type="evidence" value="ECO:0007669"/>
    <property type="project" value="UniProtKB-UniRule"/>
</dbReference>
<dbReference type="GO" id="GO:0043879">
    <property type="term" value="F:glycolate transmembrane transporter activity"/>
    <property type="evidence" value="ECO:0007669"/>
    <property type="project" value="InterPro"/>
</dbReference>
<dbReference type="GO" id="GO:0015293">
    <property type="term" value="F:symporter activity"/>
    <property type="evidence" value="ECO:0007669"/>
    <property type="project" value="UniProtKB-KW"/>
</dbReference>
<dbReference type="GO" id="GO:0006847">
    <property type="term" value="P:plasma membrane acetate transport"/>
    <property type="evidence" value="ECO:0007669"/>
    <property type="project" value="TreeGrafter"/>
</dbReference>
<dbReference type="GO" id="GO:0006814">
    <property type="term" value="P:sodium ion transport"/>
    <property type="evidence" value="ECO:0007669"/>
    <property type="project" value="UniProtKB-KW"/>
</dbReference>
<dbReference type="CDD" id="cd11480">
    <property type="entry name" value="SLC5sbd_u4"/>
    <property type="match status" value="1"/>
</dbReference>
<dbReference type="FunFam" id="1.20.1730.10:FF:000001">
    <property type="entry name" value="Cation/acetate symporter ActP"/>
    <property type="match status" value="1"/>
</dbReference>
<dbReference type="Gene3D" id="1.20.1730.10">
    <property type="entry name" value="Sodium/glucose cotransporter"/>
    <property type="match status" value="1"/>
</dbReference>
<dbReference type="HAMAP" id="MF_01426">
    <property type="entry name" value="Acet_symport_ActP"/>
    <property type="match status" value="1"/>
</dbReference>
<dbReference type="InterPro" id="IPR014083">
    <property type="entry name" value="Cation/Ac_symporter_ActP"/>
</dbReference>
<dbReference type="InterPro" id="IPR038377">
    <property type="entry name" value="Na/Glc_symporter_sf"/>
</dbReference>
<dbReference type="InterPro" id="IPR001734">
    <property type="entry name" value="Na/solute_symporter"/>
</dbReference>
<dbReference type="InterPro" id="IPR018212">
    <property type="entry name" value="Na/solute_symporter_CS"/>
</dbReference>
<dbReference type="InterPro" id="IPR050277">
    <property type="entry name" value="Sodium:Solute_Symporter"/>
</dbReference>
<dbReference type="NCBIfam" id="NF006903">
    <property type="entry name" value="PRK09395.1"/>
    <property type="match status" value="1"/>
</dbReference>
<dbReference type="NCBIfam" id="NF009135">
    <property type="entry name" value="PRK12488.1"/>
    <property type="match status" value="1"/>
</dbReference>
<dbReference type="NCBIfam" id="TIGR00813">
    <property type="entry name" value="sss"/>
    <property type="match status" value="1"/>
</dbReference>
<dbReference type="NCBIfam" id="TIGR02711">
    <property type="entry name" value="symport_actP"/>
    <property type="match status" value="1"/>
</dbReference>
<dbReference type="PANTHER" id="PTHR48086:SF6">
    <property type="entry name" value="CATION_ACETATE SYMPORTER ACTP"/>
    <property type="match status" value="1"/>
</dbReference>
<dbReference type="PANTHER" id="PTHR48086">
    <property type="entry name" value="SODIUM/PROLINE SYMPORTER-RELATED"/>
    <property type="match status" value="1"/>
</dbReference>
<dbReference type="Pfam" id="PF00474">
    <property type="entry name" value="SSF"/>
    <property type="match status" value="1"/>
</dbReference>
<dbReference type="PROSITE" id="PS00456">
    <property type="entry name" value="NA_SOLUT_SYMP_1"/>
    <property type="match status" value="1"/>
</dbReference>
<dbReference type="PROSITE" id="PS00457">
    <property type="entry name" value="NA_SOLUT_SYMP_2"/>
    <property type="match status" value="1"/>
</dbReference>
<dbReference type="PROSITE" id="PS50283">
    <property type="entry name" value="NA_SOLUT_SYMP_3"/>
    <property type="match status" value="1"/>
</dbReference>
<reference key="1">
    <citation type="submission" date="2009-07" db="EMBL/GenBank/DDBJ databases">
        <title>Complete sequence of Pectobacterium carotovorum subsp. carotovorum PC1.</title>
        <authorList>
            <consortium name="US DOE Joint Genome Institute"/>
            <person name="Lucas S."/>
            <person name="Copeland A."/>
            <person name="Lapidus A."/>
            <person name="Glavina del Rio T."/>
            <person name="Tice H."/>
            <person name="Bruce D."/>
            <person name="Goodwin L."/>
            <person name="Pitluck S."/>
            <person name="Munk A.C."/>
            <person name="Brettin T."/>
            <person name="Detter J.C."/>
            <person name="Han C."/>
            <person name="Tapia R."/>
            <person name="Larimer F."/>
            <person name="Land M."/>
            <person name="Hauser L."/>
            <person name="Kyrpides N."/>
            <person name="Mikhailova N."/>
            <person name="Balakrishnan V."/>
            <person name="Glasner J."/>
            <person name="Perna N.T."/>
        </authorList>
    </citation>
    <scope>NUCLEOTIDE SEQUENCE [LARGE SCALE GENOMIC DNA]</scope>
    <source>
        <strain>PC1</strain>
    </source>
</reference>
<organism>
    <name type="scientific">Pectobacterium carotovorum subsp. carotovorum (strain PC1)</name>
    <dbReference type="NCBI Taxonomy" id="561230"/>
    <lineage>
        <taxon>Bacteria</taxon>
        <taxon>Pseudomonadati</taxon>
        <taxon>Pseudomonadota</taxon>
        <taxon>Gammaproteobacteria</taxon>
        <taxon>Enterobacterales</taxon>
        <taxon>Pectobacteriaceae</taxon>
        <taxon>Pectobacterium</taxon>
    </lineage>
</organism>